<protein>
    <recommendedName>
        <fullName evidence="1">Ribose-phosphate pyrophosphokinase 1</fullName>
        <shortName evidence="1">RPPK 1</shortName>
        <ecNumber evidence="1">2.7.6.1</ecNumber>
    </recommendedName>
    <alternativeName>
        <fullName evidence="1">5-phospho-D-ribosyl alpha-1-diphosphate synthase 1</fullName>
    </alternativeName>
    <alternativeName>
        <fullName evidence="1">Phosphoribosyl diphosphate synthase 1</fullName>
    </alternativeName>
    <alternativeName>
        <fullName evidence="1">Phosphoribosyl pyrophosphate synthase 1</fullName>
        <shortName evidence="1">P-Rib-PP synthase 1</shortName>
        <shortName evidence="1">PRPP synthase 1</shortName>
        <shortName evidence="1">PRPPase 1</shortName>
    </alternativeName>
</protein>
<sequence length="320" mass="35044">MSYSDLKLFALSSNKELAEKVASAMGIQLGKSTVRQFSDGEIQVNIEESIRGHHVFILQSTSSPVNDNLMEILIMVDALKRASAEKISVVMPYYGYARQDRKARSREPITSKLVANMLEVAGVDRLLTVDLHAAQIQGFFDIPVDHLMGAPLIADYFDRHGLVGEDVVVVSPDHGGVTRARKLAQFLQTPIAIIDKRRSVDKMNTSEVMNIIGNVSGKKCILIDDMIDTAGTICHAADALAEAGATAVYASCTHPVLSGPALDNIQRSAIEKLIVLDTIYLPKERLIDKIEQISIADLVAEAIIRIHEKRPLSPLFEMGN</sequence>
<keyword id="KW-0067">ATP-binding</keyword>
<keyword id="KW-0963">Cytoplasm</keyword>
<keyword id="KW-0418">Kinase</keyword>
<keyword id="KW-0460">Magnesium</keyword>
<keyword id="KW-0479">Metal-binding</keyword>
<keyword id="KW-0545">Nucleotide biosynthesis</keyword>
<keyword id="KW-0547">Nucleotide-binding</keyword>
<keyword id="KW-1185">Reference proteome</keyword>
<keyword id="KW-0808">Transferase</keyword>
<reference key="1">
    <citation type="journal article" date="2001" name="Proc. Natl. Acad. Sci. U.S.A.">
        <title>Complete genome sequence of an M1 strain of Streptococcus pyogenes.</title>
        <authorList>
            <person name="Ferretti J.J."/>
            <person name="McShan W.M."/>
            <person name="Ajdic D.J."/>
            <person name="Savic D.J."/>
            <person name="Savic G."/>
            <person name="Lyon K."/>
            <person name="Primeaux C."/>
            <person name="Sezate S."/>
            <person name="Suvorov A.N."/>
            <person name="Kenton S."/>
            <person name="Lai H.S."/>
            <person name="Lin S.P."/>
            <person name="Qian Y."/>
            <person name="Jia H.G."/>
            <person name="Najar F.Z."/>
            <person name="Ren Q."/>
            <person name="Zhu H."/>
            <person name="Song L."/>
            <person name="White J."/>
            <person name="Yuan X."/>
            <person name="Clifton S.W."/>
            <person name="Roe B.A."/>
            <person name="McLaughlin R.E."/>
        </authorList>
    </citation>
    <scope>NUCLEOTIDE SEQUENCE [LARGE SCALE GENOMIC DNA]</scope>
    <source>
        <strain>ATCC 700294 / SF370 / Serotype M1</strain>
    </source>
</reference>
<reference key="2">
    <citation type="journal article" date="2005" name="J. Infect. Dis.">
        <title>Evolutionary origin and emergence of a highly successful clone of serotype M1 group A Streptococcus involved multiple horizontal gene transfer events.</title>
        <authorList>
            <person name="Sumby P."/>
            <person name="Porcella S.F."/>
            <person name="Madrigal A.G."/>
            <person name="Barbian K.D."/>
            <person name="Virtaneva K."/>
            <person name="Ricklefs S.M."/>
            <person name="Sturdevant D.E."/>
            <person name="Graham M.R."/>
            <person name="Vuopio-Varkila J."/>
            <person name="Hoe N.P."/>
            <person name="Musser J.M."/>
        </authorList>
    </citation>
    <scope>NUCLEOTIDE SEQUENCE [LARGE SCALE GENOMIC DNA]</scope>
    <source>
        <strain>ATCC BAA-947 / MGAS5005 / Serotype M1</strain>
    </source>
</reference>
<organism>
    <name type="scientific">Streptococcus pyogenes serotype M1</name>
    <dbReference type="NCBI Taxonomy" id="301447"/>
    <lineage>
        <taxon>Bacteria</taxon>
        <taxon>Bacillati</taxon>
        <taxon>Bacillota</taxon>
        <taxon>Bacilli</taxon>
        <taxon>Lactobacillales</taxon>
        <taxon>Streptococcaceae</taxon>
        <taxon>Streptococcus</taxon>
    </lineage>
</organism>
<feature type="chain" id="PRO_0000141208" description="Ribose-phosphate pyrophosphokinase 1">
    <location>
        <begin position="1"/>
        <end position="320"/>
    </location>
</feature>
<feature type="active site" evidence="1">
    <location>
        <position position="196"/>
    </location>
</feature>
<feature type="binding site" evidence="1">
    <location>
        <begin position="39"/>
        <end position="41"/>
    </location>
    <ligand>
        <name>ATP</name>
        <dbReference type="ChEBI" id="CHEBI:30616"/>
    </ligand>
</feature>
<feature type="binding site" evidence="1">
    <location>
        <begin position="98"/>
        <end position="99"/>
    </location>
    <ligand>
        <name>ATP</name>
        <dbReference type="ChEBI" id="CHEBI:30616"/>
    </ligand>
</feature>
<feature type="binding site" evidence="1">
    <location>
        <position position="132"/>
    </location>
    <ligand>
        <name>Mg(2+)</name>
        <dbReference type="ChEBI" id="CHEBI:18420"/>
        <label>1</label>
    </ligand>
</feature>
<feature type="binding site" evidence="1">
    <location>
        <position position="173"/>
    </location>
    <ligand>
        <name>Mg(2+)</name>
        <dbReference type="ChEBI" id="CHEBI:18420"/>
        <label>2</label>
    </ligand>
</feature>
<feature type="binding site" evidence="1">
    <location>
        <position position="198"/>
    </location>
    <ligand>
        <name>D-ribose 5-phosphate</name>
        <dbReference type="ChEBI" id="CHEBI:78346"/>
    </ligand>
</feature>
<feature type="binding site" evidence="1">
    <location>
        <position position="224"/>
    </location>
    <ligand>
        <name>D-ribose 5-phosphate</name>
        <dbReference type="ChEBI" id="CHEBI:78346"/>
    </ligand>
</feature>
<feature type="binding site" evidence="1">
    <location>
        <begin position="228"/>
        <end position="232"/>
    </location>
    <ligand>
        <name>D-ribose 5-phosphate</name>
        <dbReference type="ChEBI" id="CHEBI:78346"/>
    </ligand>
</feature>
<gene>
    <name evidence="1" type="primary">prs1</name>
    <name type="synonym">prsA</name>
    <name type="synonym">prsA.1</name>
    <name type="ordered locus">SPy_0020</name>
    <name type="ordered locus">M5005_Spy0018</name>
</gene>
<name>KPRS1_STRP1</name>
<accession>P65243</accession>
<accession>Q491T1</accession>
<accession>Q9A1Z7</accession>
<comment type="function">
    <text evidence="1">Involved in the biosynthesis of the central metabolite phospho-alpha-D-ribosyl-1-pyrophosphate (PRPP) via the transfer of pyrophosphoryl group from ATP to 1-hydroxyl of ribose-5-phosphate (Rib-5-P).</text>
</comment>
<comment type="catalytic activity">
    <reaction evidence="1">
        <text>D-ribose 5-phosphate + ATP = 5-phospho-alpha-D-ribose 1-diphosphate + AMP + H(+)</text>
        <dbReference type="Rhea" id="RHEA:15609"/>
        <dbReference type="ChEBI" id="CHEBI:15378"/>
        <dbReference type="ChEBI" id="CHEBI:30616"/>
        <dbReference type="ChEBI" id="CHEBI:58017"/>
        <dbReference type="ChEBI" id="CHEBI:78346"/>
        <dbReference type="ChEBI" id="CHEBI:456215"/>
        <dbReference type="EC" id="2.7.6.1"/>
    </reaction>
</comment>
<comment type="cofactor">
    <cofactor evidence="1">
        <name>Mg(2+)</name>
        <dbReference type="ChEBI" id="CHEBI:18420"/>
    </cofactor>
    <text evidence="1">Binds 2 Mg(2+) ions per subunit.</text>
</comment>
<comment type="pathway">
    <text evidence="1">Metabolic intermediate biosynthesis; 5-phospho-alpha-D-ribose 1-diphosphate biosynthesis; 5-phospho-alpha-D-ribose 1-diphosphate from D-ribose 5-phosphate (route I): step 1/1.</text>
</comment>
<comment type="subunit">
    <text evidence="1">Homohexamer.</text>
</comment>
<comment type="subcellular location">
    <subcellularLocation>
        <location evidence="1">Cytoplasm</location>
    </subcellularLocation>
</comment>
<comment type="similarity">
    <text evidence="1">Belongs to the ribose-phosphate pyrophosphokinase family. Class I subfamily.</text>
</comment>
<evidence type="ECO:0000255" key="1">
    <source>
        <dbReference type="HAMAP-Rule" id="MF_00583"/>
    </source>
</evidence>
<dbReference type="EC" id="2.7.6.1" evidence="1"/>
<dbReference type="EMBL" id="AE004092">
    <property type="protein sequence ID" value="AAK33159.1"/>
    <property type="molecule type" value="Genomic_DNA"/>
</dbReference>
<dbReference type="EMBL" id="CP000017">
    <property type="protein sequence ID" value="AAZ50637.1"/>
    <property type="molecule type" value="Genomic_DNA"/>
</dbReference>
<dbReference type="RefSeq" id="NP_268437.1">
    <property type="nucleotide sequence ID" value="NC_002737.2"/>
</dbReference>
<dbReference type="SMR" id="P65243"/>
<dbReference type="PaxDb" id="1314-HKU360_00050"/>
<dbReference type="KEGG" id="spy:SPy_0020"/>
<dbReference type="KEGG" id="spz:M5005_Spy0018"/>
<dbReference type="PATRIC" id="fig|160490.10.peg.19"/>
<dbReference type="HOGENOM" id="CLU_033546_4_0_9"/>
<dbReference type="OMA" id="YFGWARQ"/>
<dbReference type="UniPathway" id="UPA00087">
    <property type="reaction ID" value="UER00172"/>
</dbReference>
<dbReference type="Proteomes" id="UP000000750">
    <property type="component" value="Chromosome"/>
</dbReference>
<dbReference type="GO" id="GO:0005737">
    <property type="term" value="C:cytoplasm"/>
    <property type="evidence" value="ECO:0007669"/>
    <property type="project" value="UniProtKB-SubCell"/>
</dbReference>
<dbReference type="GO" id="GO:0002189">
    <property type="term" value="C:ribose phosphate diphosphokinase complex"/>
    <property type="evidence" value="ECO:0007669"/>
    <property type="project" value="TreeGrafter"/>
</dbReference>
<dbReference type="GO" id="GO:0005524">
    <property type="term" value="F:ATP binding"/>
    <property type="evidence" value="ECO:0007669"/>
    <property type="project" value="UniProtKB-KW"/>
</dbReference>
<dbReference type="GO" id="GO:0016301">
    <property type="term" value="F:kinase activity"/>
    <property type="evidence" value="ECO:0007669"/>
    <property type="project" value="UniProtKB-KW"/>
</dbReference>
<dbReference type="GO" id="GO:0000287">
    <property type="term" value="F:magnesium ion binding"/>
    <property type="evidence" value="ECO:0007669"/>
    <property type="project" value="UniProtKB-UniRule"/>
</dbReference>
<dbReference type="GO" id="GO:0004749">
    <property type="term" value="F:ribose phosphate diphosphokinase activity"/>
    <property type="evidence" value="ECO:0007669"/>
    <property type="project" value="UniProtKB-UniRule"/>
</dbReference>
<dbReference type="GO" id="GO:0006015">
    <property type="term" value="P:5-phosphoribose 1-diphosphate biosynthetic process"/>
    <property type="evidence" value="ECO:0007669"/>
    <property type="project" value="UniProtKB-UniRule"/>
</dbReference>
<dbReference type="GO" id="GO:0006164">
    <property type="term" value="P:purine nucleotide biosynthetic process"/>
    <property type="evidence" value="ECO:0007669"/>
    <property type="project" value="TreeGrafter"/>
</dbReference>
<dbReference type="GO" id="GO:0009156">
    <property type="term" value="P:ribonucleoside monophosphate biosynthetic process"/>
    <property type="evidence" value="ECO:0007669"/>
    <property type="project" value="InterPro"/>
</dbReference>
<dbReference type="CDD" id="cd06223">
    <property type="entry name" value="PRTases_typeI"/>
    <property type="match status" value="1"/>
</dbReference>
<dbReference type="FunFam" id="3.40.50.2020:FF:000001">
    <property type="entry name" value="Ribose-phosphate pyrophosphokinase"/>
    <property type="match status" value="1"/>
</dbReference>
<dbReference type="Gene3D" id="3.40.50.2020">
    <property type="match status" value="2"/>
</dbReference>
<dbReference type="HAMAP" id="MF_00583_B">
    <property type="entry name" value="RibP_PPkinase_B"/>
    <property type="match status" value="1"/>
</dbReference>
<dbReference type="InterPro" id="IPR000842">
    <property type="entry name" value="PRib_PP_synth_CS"/>
</dbReference>
<dbReference type="InterPro" id="IPR029099">
    <property type="entry name" value="Pribosyltran_N"/>
</dbReference>
<dbReference type="InterPro" id="IPR000836">
    <property type="entry name" value="PRibTrfase_dom"/>
</dbReference>
<dbReference type="InterPro" id="IPR029057">
    <property type="entry name" value="PRTase-like"/>
</dbReference>
<dbReference type="InterPro" id="IPR005946">
    <property type="entry name" value="Rib-P_diPkinase"/>
</dbReference>
<dbReference type="InterPro" id="IPR037515">
    <property type="entry name" value="Rib-P_diPkinase_bac"/>
</dbReference>
<dbReference type="NCBIfam" id="NF002320">
    <property type="entry name" value="PRK01259.1"/>
    <property type="match status" value="1"/>
</dbReference>
<dbReference type="NCBIfam" id="NF002618">
    <property type="entry name" value="PRK02269.1"/>
    <property type="match status" value="1"/>
</dbReference>
<dbReference type="NCBIfam" id="TIGR01251">
    <property type="entry name" value="ribP_PPkin"/>
    <property type="match status" value="1"/>
</dbReference>
<dbReference type="PANTHER" id="PTHR10210">
    <property type="entry name" value="RIBOSE-PHOSPHATE DIPHOSPHOKINASE FAMILY MEMBER"/>
    <property type="match status" value="1"/>
</dbReference>
<dbReference type="PANTHER" id="PTHR10210:SF41">
    <property type="entry name" value="RIBOSE-PHOSPHATE PYROPHOSPHOKINASE 1, CHLOROPLASTIC"/>
    <property type="match status" value="1"/>
</dbReference>
<dbReference type="Pfam" id="PF14572">
    <property type="entry name" value="Pribosyl_synth"/>
    <property type="match status" value="1"/>
</dbReference>
<dbReference type="Pfam" id="PF13793">
    <property type="entry name" value="Pribosyltran_N"/>
    <property type="match status" value="1"/>
</dbReference>
<dbReference type="SMART" id="SM01400">
    <property type="entry name" value="Pribosyltran_N"/>
    <property type="match status" value="1"/>
</dbReference>
<dbReference type="SUPFAM" id="SSF53271">
    <property type="entry name" value="PRTase-like"/>
    <property type="match status" value="1"/>
</dbReference>
<dbReference type="PROSITE" id="PS00114">
    <property type="entry name" value="PRPP_SYNTHASE"/>
    <property type="match status" value="1"/>
</dbReference>
<proteinExistence type="inferred from homology"/>